<proteinExistence type="inferred from homology"/>
<gene>
    <name evidence="1" type="primary">obg</name>
    <name type="ordered locus">Ddes_2248</name>
</gene>
<reference key="1">
    <citation type="submission" date="2009-01" db="EMBL/GenBank/DDBJ databases">
        <title>Complete sequence of Desulfovibrio desulfuricans subsp. desulfuricans str. ATCC 27774.</title>
        <authorList>
            <consortium name="US DOE Joint Genome Institute"/>
            <person name="Lucas S."/>
            <person name="Copeland A."/>
            <person name="Lapidus A."/>
            <person name="Glavina del Rio T."/>
            <person name="Tice H."/>
            <person name="Bruce D."/>
            <person name="Goodwin L."/>
            <person name="Pitluck S."/>
            <person name="Sims D."/>
            <person name="Lu M."/>
            <person name="Kiss H."/>
            <person name="Meineke L."/>
            <person name="Brettin T."/>
            <person name="Detter J.C."/>
            <person name="Han C."/>
            <person name="Larimer F."/>
            <person name="Land M."/>
            <person name="Hauser L."/>
            <person name="Kyrpides N."/>
            <person name="Ovchinnikova G."/>
            <person name="Hazen T.C."/>
        </authorList>
    </citation>
    <scope>NUCLEOTIDE SEQUENCE [LARGE SCALE GENOMIC DNA]</scope>
    <source>
        <strain>ATCC 27774 / DSM 6949 / MB</strain>
    </source>
</reference>
<keyword id="KW-0963">Cytoplasm</keyword>
<keyword id="KW-0342">GTP-binding</keyword>
<keyword id="KW-0378">Hydrolase</keyword>
<keyword id="KW-0460">Magnesium</keyword>
<keyword id="KW-0479">Metal-binding</keyword>
<keyword id="KW-0547">Nucleotide-binding</keyword>
<feature type="chain" id="PRO_0000385889" description="GTPase Obg">
    <location>
        <begin position="1"/>
        <end position="366"/>
    </location>
</feature>
<feature type="domain" description="Obg" evidence="2">
    <location>
        <begin position="1"/>
        <end position="161"/>
    </location>
</feature>
<feature type="domain" description="OBG-type G" evidence="1">
    <location>
        <begin position="162"/>
        <end position="334"/>
    </location>
</feature>
<feature type="region of interest" description="Disordered" evidence="3">
    <location>
        <begin position="121"/>
        <end position="148"/>
    </location>
</feature>
<feature type="binding site" evidence="1">
    <location>
        <begin position="168"/>
        <end position="175"/>
    </location>
    <ligand>
        <name>GTP</name>
        <dbReference type="ChEBI" id="CHEBI:37565"/>
    </ligand>
</feature>
<feature type="binding site" evidence="1">
    <location>
        <position position="175"/>
    </location>
    <ligand>
        <name>Mg(2+)</name>
        <dbReference type="ChEBI" id="CHEBI:18420"/>
    </ligand>
</feature>
<feature type="binding site" evidence="1">
    <location>
        <begin position="193"/>
        <end position="197"/>
    </location>
    <ligand>
        <name>GTP</name>
        <dbReference type="ChEBI" id="CHEBI:37565"/>
    </ligand>
</feature>
<feature type="binding site" evidence="1">
    <location>
        <position position="195"/>
    </location>
    <ligand>
        <name>Mg(2+)</name>
        <dbReference type="ChEBI" id="CHEBI:18420"/>
    </ligand>
</feature>
<feature type="binding site" evidence="1">
    <location>
        <begin position="217"/>
        <end position="220"/>
    </location>
    <ligand>
        <name>GTP</name>
        <dbReference type="ChEBI" id="CHEBI:37565"/>
    </ligand>
</feature>
<feature type="binding site" evidence="1">
    <location>
        <begin position="287"/>
        <end position="290"/>
    </location>
    <ligand>
        <name>GTP</name>
        <dbReference type="ChEBI" id="CHEBI:37565"/>
    </ligand>
</feature>
<feature type="binding site" evidence="1">
    <location>
        <begin position="315"/>
        <end position="317"/>
    </location>
    <ligand>
        <name>GTP</name>
        <dbReference type="ChEBI" id="CHEBI:37565"/>
    </ligand>
</feature>
<accession>B8J4L3</accession>
<protein>
    <recommendedName>
        <fullName evidence="1">GTPase Obg</fullName>
        <ecNumber evidence="1">3.6.5.-</ecNumber>
    </recommendedName>
    <alternativeName>
        <fullName evidence="1">GTP-binding protein Obg</fullName>
    </alternativeName>
</protein>
<evidence type="ECO:0000255" key="1">
    <source>
        <dbReference type="HAMAP-Rule" id="MF_01454"/>
    </source>
</evidence>
<evidence type="ECO:0000255" key="2">
    <source>
        <dbReference type="PROSITE-ProRule" id="PRU01231"/>
    </source>
</evidence>
<evidence type="ECO:0000256" key="3">
    <source>
        <dbReference type="SAM" id="MobiDB-lite"/>
    </source>
</evidence>
<sequence>MRFVDEARIQVRAGKGGHGCLSFRREKFVPRGGPDGGNGGDGGSVYLRADNRLLSLYDFRLKRLYEAQNGRPGEGSQCDGRKGENLVLNLPVGTLVYAEGPEGEVLVADLSEPDAEVLVASGGRGGKGNEHFKSSTMRAPRFSQPGEPGEEFNLRLELKILADAGLIGLPNAGKSTFISQVSAARPKIAAYPFTTLTPNLGVMIDEVDPDRRMVIADIPGLIEGAHEGQGLGLRFLKHVERTRFLVHILSIEDVGDEDPWAGFSLVNEELRRFDAELGERRQIEVVNKIDLVSPERLEALKERARADGREVYFISARDDLGLEPLVQELWQVCESTARNEPIVRLEGLTDVEEEEFPEIEVIYTRE</sequence>
<organism>
    <name type="scientific">Desulfovibrio desulfuricans (strain ATCC 27774 / DSM 6949 / MB)</name>
    <dbReference type="NCBI Taxonomy" id="525146"/>
    <lineage>
        <taxon>Bacteria</taxon>
        <taxon>Pseudomonadati</taxon>
        <taxon>Thermodesulfobacteriota</taxon>
        <taxon>Desulfovibrionia</taxon>
        <taxon>Desulfovibrionales</taxon>
        <taxon>Desulfovibrionaceae</taxon>
        <taxon>Desulfovibrio</taxon>
    </lineage>
</organism>
<comment type="function">
    <text evidence="1">An essential GTPase which binds GTP, GDP and possibly (p)ppGpp with moderate affinity, with high nucleotide exchange rates and a fairly low GTP hydrolysis rate. Plays a role in control of the cell cycle, stress response, ribosome biogenesis and in those bacteria that undergo differentiation, in morphogenesis control.</text>
</comment>
<comment type="cofactor">
    <cofactor evidence="1">
        <name>Mg(2+)</name>
        <dbReference type="ChEBI" id="CHEBI:18420"/>
    </cofactor>
</comment>
<comment type="subunit">
    <text evidence="1">Monomer.</text>
</comment>
<comment type="subcellular location">
    <subcellularLocation>
        <location evidence="1">Cytoplasm</location>
    </subcellularLocation>
</comment>
<comment type="similarity">
    <text evidence="1">Belongs to the TRAFAC class OBG-HflX-like GTPase superfamily. OBG GTPase family.</text>
</comment>
<dbReference type="EC" id="3.6.5.-" evidence="1"/>
<dbReference type="EMBL" id="CP001358">
    <property type="protein sequence ID" value="ACL50143.1"/>
    <property type="molecule type" value="Genomic_DNA"/>
</dbReference>
<dbReference type="SMR" id="B8J4L3"/>
<dbReference type="STRING" id="525146.Ddes_2248"/>
<dbReference type="KEGG" id="dds:Ddes_2248"/>
<dbReference type="eggNOG" id="COG0536">
    <property type="taxonomic scope" value="Bacteria"/>
</dbReference>
<dbReference type="HOGENOM" id="CLU_011747_2_0_7"/>
<dbReference type="GO" id="GO:0005737">
    <property type="term" value="C:cytoplasm"/>
    <property type="evidence" value="ECO:0007669"/>
    <property type="project" value="UniProtKB-SubCell"/>
</dbReference>
<dbReference type="GO" id="GO:0005525">
    <property type="term" value="F:GTP binding"/>
    <property type="evidence" value="ECO:0007669"/>
    <property type="project" value="UniProtKB-UniRule"/>
</dbReference>
<dbReference type="GO" id="GO:0003924">
    <property type="term" value="F:GTPase activity"/>
    <property type="evidence" value="ECO:0007669"/>
    <property type="project" value="UniProtKB-UniRule"/>
</dbReference>
<dbReference type="GO" id="GO:0000287">
    <property type="term" value="F:magnesium ion binding"/>
    <property type="evidence" value="ECO:0007669"/>
    <property type="project" value="InterPro"/>
</dbReference>
<dbReference type="GO" id="GO:0042254">
    <property type="term" value="P:ribosome biogenesis"/>
    <property type="evidence" value="ECO:0007669"/>
    <property type="project" value="UniProtKB-UniRule"/>
</dbReference>
<dbReference type="CDD" id="cd01898">
    <property type="entry name" value="Obg"/>
    <property type="match status" value="1"/>
</dbReference>
<dbReference type="FunFam" id="2.70.210.12:FF:000001">
    <property type="entry name" value="GTPase Obg"/>
    <property type="match status" value="1"/>
</dbReference>
<dbReference type="Gene3D" id="2.70.210.12">
    <property type="entry name" value="GTP1/OBG domain"/>
    <property type="match status" value="1"/>
</dbReference>
<dbReference type="Gene3D" id="3.40.50.300">
    <property type="entry name" value="P-loop containing nucleotide triphosphate hydrolases"/>
    <property type="match status" value="1"/>
</dbReference>
<dbReference type="HAMAP" id="MF_01454">
    <property type="entry name" value="GTPase_Obg"/>
    <property type="match status" value="1"/>
</dbReference>
<dbReference type="InterPro" id="IPR031167">
    <property type="entry name" value="G_OBG"/>
</dbReference>
<dbReference type="InterPro" id="IPR006073">
    <property type="entry name" value="GTP-bd"/>
</dbReference>
<dbReference type="InterPro" id="IPR014100">
    <property type="entry name" value="GTP-bd_Obg/CgtA"/>
</dbReference>
<dbReference type="InterPro" id="IPR006074">
    <property type="entry name" value="GTP1-OBG_CS"/>
</dbReference>
<dbReference type="InterPro" id="IPR006169">
    <property type="entry name" value="GTP1_OBG_dom"/>
</dbReference>
<dbReference type="InterPro" id="IPR036726">
    <property type="entry name" value="GTP1_OBG_dom_sf"/>
</dbReference>
<dbReference type="InterPro" id="IPR045086">
    <property type="entry name" value="OBG_GTPase"/>
</dbReference>
<dbReference type="InterPro" id="IPR027417">
    <property type="entry name" value="P-loop_NTPase"/>
</dbReference>
<dbReference type="NCBIfam" id="TIGR02729">
    <property type="entry name" value="Obg_CgtA"/>
    <property type="match status" value="1"/>
</dbReference>
<dbReference type="NCBIfam" id="NF008955">
    <property type="entry name" value="PRK12297.1"/>
    <property type="match status" value="1"/>
</dbReference>
<dbReference type="NCBIfam" id="NF008956">
    <property type="entry name" value="PRK12299.1"/>
    <property type="match status" value="1"/>
</dbReference>
<dbReference type="PANTHER" id="PTHR11702">
    <property type="entry name" value="DEVELOPMENTALLY REGULATED GTP-BINDING PROTEIN-RELATED"/>
    <property type="match status" value="1"/>
</dbReference>
<dbReference type="PANTHER" id="PTHR11702:SF31">
    <property type="entry name" value="MITOCHONDRIAL RIBOSOME-ASSOCIATED GTPASE 2"/>
    <property type="match status" value="1"/>
</dbReference>
<dbReference type="Pfam" id="PF01018">
    <property type="entry name" value="GTP1_OBG"/>
    <property type="match status" value="1"/>
</dbReference>
<dbReference type="Pfam" id="PF01926">
    <property type="entry name" value="MMR_HSR1"/>
    <property type="match status" value="1"/>
</dbReference>
<dbReference type="PIRSF" id="PIRSF002401">
    <property type="entry name" value="GTP_bd_Obg/CgtA"/>
    <property type="match status" value="1"/>
</dbReference>
<dbReference type="PRINTS" id="PR00326">
    <property type="entry name" value="GTP1OBG"/>
</dbReference>
<dbReference type="SUPFAM" id="SSF82051">
    <property type="entry name" value="Obg GTP-binding protein N-terminal domain"/>
    <property type="match status" value="1"/>
</dbReference>
<dbReference type="SUPFAM" id="SSF52540">
    <property type="entry name" value="P-loop containing nucleoside triphosphate hydrolases"/>
    <property type="match status" value="1"/>
</dbReference>
<dbReference type="PROSITE" id="PS51710">
    <property type="entry name" value="G_OBG"/>
    <property type="match status" value="1"/>
</dbReference>
<dbReference type="PROSITE" id="PS00905">
    <property type="entry name" value="GTP1_OBG"/>
    <property type="match status" value="1"/>
</dbReference>
<dbReference type="PROSITE" id="PS51883">
    <property type="entry name" value="OBG"/>
    <property type="match status" value="1"/>
</dbReference>
<name>OBG_DESDA</name>